<evidence type="ECO:0000255" key="1">
    <source>
        <dbReference type="HAMAP-Rule" id="MF_01343"/>
    </source>
</evidence>
<evidence type="ECO:0000256" key="2">
    <source>
        <dbReference type="SAM" id="MobiDB-lite"/>
    </source>
</evidence>
<evidence type="ECO:0000305" key="3"/>
<feature type="chain" id="PRO_1000054852" description="Small ribosomal subunit protein uS15">
    <location>
        <begin position="1"/>
        <end position="151"/>
    </location>
</feature>
<feature type="region of interest" description="Disordered" evidence="2">
    <location>
        <begin position="1"/>
        <end position="21"/>
    </location>
</feature>
<feature type="compositionally biased region" description="Basic residues" evidence="2">
    <location>
        <begin position="1"/>
        <end position="16"/>
    </location>
</feature>
<comment type="subunit">
    <text evidence="1">Part of the 30S ribosomal subunit.</text>
</comment>
<comment type="similarity">
    <text evidence="1">Belongs to the universal ribosomal protein uS15 family.</text>
</comment>
<name>RS15_PYRIL</name>
<organism>
    <name type="scientific">Pyrobaculum islandicum (strain DSM 4184 / JCM 9189 / GEO3)</name>
    <dbReference type="NCBI Taxonomy" id="384616"/>
    <lineage>
        <taxon>Archaea</taxon>
        <taxon>Thermoproteota</taxon>
        <taxon>Thermoprotei</taxon>
        <taxon>Thermoproteales</taxon>
        <taxon>Thermoproteaceae</taxon>
        <taxon>Pyrobaculum</taxon>
    </lineage>
</organism>
<dbReference type="EMBL" id="CP000504">
    <property type="protein sequence ID" value="ABL87956.1"/>
    <property type="molecule type" value="Genomic_DNA"/>
</dbReference>
<dbReference type="RefSeq" id="WP_011762532.1">
    <property type="nucleotide sequence ID" value="NC_008701.1"/>
</dbReference>
<dbReference type="SMR" id="A1RSM4"/>
<dbReference type="STRING" id="384616.Pisl_0780"/>
<dbReference type="GeneID" id="4617113"/>
<dbReference type="KEGG" id="pis:Pisl_0780"/>
<dbReference type="eggNOG" id="arCOG04185">
    <property type="taxonomic scope" value="Archaea"/>
</dbReference>
<dbReference type="HOGENOM" id="CLU_090139_2_0_2"/>
<dbReference type="OrthoDB" id="6533at2157"/>
<dbReference type="Proteomes" id="UP000002595">
    <property type="component" value="Chromosome"/>
</dbReference>
<dbReference type="GO" id="GO:0022627">
    <property type="term" value="C:cytosolic small ribosomal subunit"/>
    <property type="evidence" value="ECO:0007669"/>
    <property type="project" value="TreeGrafter"/>
</dbReference>
<dbReference type="GO" id="GO:0070181">
    <property type="term" value="F:small ribosomal subunit rRNA binding"/>
    <property type="evidence" value="ECO:0007669"/>
    <property type="project" value="TreeGrafter"/>
</dbReference>
<dbReference type="GO" id="GO:0003735">
    <property type="term" value="F:structural constituent of ribosome"/>
    <property type="evidence" value="ECO:0007669"/>
    <property type="project" value="InterPro"/>
</dbReference>
<dbReference type="GO" id="GO:0006412">
    <property type="term" value="P:translation"/>
    <property type="evidence" value="ECO:0007669"/>
    <property type="project" value="UniProtKB-UniRule"/>
</dbReference>
<dbReference type="CDD" id="cd00353">
    <property type="entry name" value="Ribosomal_S15p_S13e"/>
    <property type="match status" value="1"/>
</dbReference>
<dbReference type="FunFam" id="1.10.287.10:FF:000003">
    <property type="entry name" value="40S ribosomal protein S13"/>
    <property type="match status" value="1"/>
</dbReference>
<dbReference type="FunFam" id="4.10.860.130:FF:000001">
    <property type="entry name" value="40S ribosomal protein S13"/>
    <property type="match status" value="1"/>
</dbReference>
<dbReference type="Gene3D" id="4.10.860.130">
    <property type="match status" value="1"/>
</dbReference>
<dbReference type="Gene3D" id="1.10.287.10">
    <property type="entry name" value="S15/NS1, RNA-binding"/>
    <property type="match status" value="1"/>
</dbReference>
<dbReference type="HAMAP" id="MF_01343_A">
    <property type="entry name" value="Ribosomal_uS15_A"/>
    <property type="match status" value="1"/>
</dbReference>
<dbReference type="InterPro" id="IPR000589">
    <property type="entry name" value="Ribosomal_uS15"/>
</dbReference>
<dbReference type="InterPro" id="IPR023029">
    <property type="entry name" value="Ribosomal_uS15_arc_euk"/>
</dbReference>
<dbReference type="InterPro" id="IPR012606">
    <property type="entry name" value="Ribosomal_uS15_N"/>
</dbReference>
<dbReference type="InterPro" id="IPR009068">
    <property type="entry name" value="uS15_NS1_RNA-bd_sf"/>
</dbReference>
<dbReference type="NCBIfam" id="NF006331">
    <property type="entry name" value="PRK08561.1"/>
    <property type="match status" value="1"/>
</dbReference>
<dbReference type="PANTHER" id="PTHR11885">
    <property type="entry name" value="RIBOSOMAL PROTEIN S15P/S13E"/>
    <property type="match status" value="1"/>
</dbReference>
<dbReference type="PANTHER" id="PTHR11885:SF6">
    <property type="entry name" value="SMALL RIBOSOMAL SUBUNIT PROTEIN US15"/>
    <property type="match status" value="1"/>
</dbReference>
<dbReference type="Pfam" id="PF08069">
    <property type="entry name" value="Ribosomal_S13_N"/>
    <property type="match status" value="1"/>
</dbReference>
<dbReference type="Pfam" id="PF00312">
    <property type="entry name" value="Ribosomal_S15"/>
    <property type="match status" value="1"/>
</dbReference>
<dbReference type="SMART" id="SM01386">
    <property type="entry name" value="Ribosomal_S13_N"/>
    <property type="match status" value="1"/>
</dbReference>
<dbReference type="SMART" id="SM01387">
    <property type="entry name" value="Ribosomal_S15"/>
    <property type="match status" value="1"/>
</dbReference>
<dbReference type="SUPFAM" id="SSF47060">
    <property type="entry name" value="S15/NS1 RNA-binding domain"/>
    <property type="match status" value="1"/>
</dbReference>
<dbReference type="PROSITE" id="PS00362">
    <property type="entry name" value="RIBOSOMAL_S15"/>
    <property type="match status" value="1"/>
</dbReference>
<protein>
    <recommendedName>
        <fullName evidence="1">Small ribosomal subunit protein uS15</fullName>
    </recommendedName>
    <alternativeName>
        <fullName evidence="3">30S ribosomal protein S15</fullName>
    </alternativeName>
</protein>
<proteinExistence type="inferred from homology"/>
<sequence>MPHRSRHKKGRSRSVRPAHPTVPTWIQYTPDEVEQLVVELARRGFPPSQIGIILRDQYGIPLVKPITGKKLTKILEEHGIRQEIPEDLLNLIKRALRIRKHLEEHPKDMASRRGLQLVESKIHRLIKYYKRVGKLPKEFVYNPEALSHLAT</sequence>
<reference key="1">
    <citation type="submission" date="2006-12" db="EMBL/GenBank/DDBJ databases">
        <title>Complete sequence of Pyrobaculum islandicum DSM 4184.</title>
        <authorList>
            <person name="Copeland A."/>
            <person name="Lucas S."/>
            <person name="Lapidus A."/>
            <person name="Barry K."/>
            <person name="Detter J.C."/>
            <person name="Glavina del Rio T."/>
            <person name="Dalin E."/>
            <person name="Tice H."/>
            <person name="Pitluck S."/>
            <person name="Meincke L."/>
            <person name="Brettin T."/>
            <person name="Bruce D."/>
            <person name="Han C."/>
            <person name="Tapia R."/>
            <person name="Gilna P."/>
            <person name="Schmutz J."/>
            <person name="Larimer F."/>
            <person name="Land M."/>
            <person name="Hauser L."/>
            <person name="Kyrpides N."/>
            <person name="Mikhailova N."/>
            <person name="Cozen A.E."/>
            <person name="Fitz-Gibbon S.T."/>
            <person name="House C.H."/>
            <person name="Saltikov C."/>
            <person name="Lowe T."/>
            <person name="Richardson P."/>
        </authorList>
    </citation>
    <scope>NUCLEOTIDE SEQUENCE [LARGE SCALE GENOMIC DNA]</scope>
    <source>
        <strain>DSM 4184 / JCM 9189 / GEO3</strain>
    </source>
</reference>
<accession>A1RSM4</accession>
<keyword id="KW-0687">Ribonucleoprotein</keyword>
<keyword id="KW-0689">Ribosomal protein</keyword>
<gene>
    <name evidence="1" type="primary">rps15</name>
    <name type="ordered locus">Pisl_0780</name>
</gene>